<evidence type="ECO:0000250" key="1">
    <source>
        <dbReference type="UniProtKB" id="P05221"/>
    </source>
</evidence>
<evidence type="ECO:0000250" key="2">
    <source>
        <dbReference type="UniProtKB" id="Q86SE8"/>
    </source>
</evidence>
<evidence type="ECO:0000256" key="3">
    <source>
        <dbReference type="SAM" id="MobiDB-lite"/>
    </source>
</evidence>
<evidence type="ECO:0000269" key="4">
    <source>
    </source>
</evidence>
<evidence type="ECO:0000305" key="5"/>
<evidence type="ECO:0000305" key="6">
    <source>
    </source>
</evidence>
<evidence type="ECO:0000312" key="7">
    <source>
        <dbReference type="EMBL" id="ABC69370.1"/>
    </source>
</evidence>
<protein>
    <recommendedName>
        <fullName evidence="5">Nucleoplasmin</fullName>
    </recommendedName>
</protein>
<keyword id="KW-0143">Chaperone</keyword>
<keyword id="KW-0156">Chromatin regulator</keyword>
<keyword id="KW-0217">Developmental protein</keyword>
<keyword id="KW-0278">Fertilization</keyword>
<keyword id="KW-0539">Nucleus</keyword>
<reference key="1">
    <citation type="journal article" date="2006" name="BMC Genomics">
        <title>The characterization of amphibian nucleoplasmins yields new insight into their role in sperm chromatin remodeling.</title>
        <authorList>
            <person name="Frehlick L.J."/>
            <person name="Eirin-Lopez J.M."/>
            <person name="Jeffery E.D."/>
            <person name="Hunt D.F."/>
            <person name="Ausio J."/>
        </authorList>
    </citation>
    <scope>NUCLEOTIDE SEQUENCE [MRNA]</scope>
    <scope>FUNCTION</scope>
    <scope>SUBUNIT</scope>
    <scope>SUBCELLULAR LOCATION</scope>
    <scope>TISSUE SPECIFICITY</scope>
</reference>
<dbReference type="EMBL" id="DQ340657">
    <property type="protein sequence ID" value="ABC69370.1"/>
    <property type="molecule type" value="mRNA"/>
</dbReference>
<dbReference type="SMR" id="Q1HTZ8"/>
<dbReference type="GO" id="GO:0005737">
    <property type="term" value="C:cytoplasm"/>
    <property type="evidence" value="ECO:0007669"/>
    <property type="project" value="TreeGrafter"/>
</dbReference>
<dbReference type="GO" id="GO:0005730">
    <property type="term" value="C:nucleolus"/>
    <property type="evidence" value="ECO:0007669"/>
    <property type="project" value="TreeGrafter"/>
</dbReference>
<dbReference type="GO" id="GO:0005654">
    <property type="term" value="C:nucleoplasm"/>
    <property type="evidence" value="ECO:0007669"/>
    <property type="project" value="TreeGrafter"/>
</dbReference>
<dbReference type="GO" id="GO:0003682">
    <property type="term" value="F:chromatin binding"/>
    <property type="evidence" value="ECO:0007669"/>
    <property type="project" value="TreeGrafter"/>
</dbReference>
<dbReference type="GO" id="GO:0042393">
    <property type="term" value="F:histone binding"/>
    <property type="evidence" value="ECO:0007669"/>
    <property type="project" value="TreeGrafter"/>
</dbReference>
<dbReference type="GO" id="GO:0003723">
    <property type="term" value="F:RNA binding"/>
    <property type="evidence" value="ECO:0007669"/>
    <property type="project" value="TreeGrafter"/>
</dbReference>
<dbReference type="GO" id="GO:0006338">
    <property type="term" value="P:chromatin remodeling"/>
    <property type="evidence" value="ECO:0007669"/>
    <property type="project" value="TreeGrafter"/>
</dbReference>
<dbReference type="GO" id="GO:0045740">
    <property type="term" value="P:positive regulation of DNA replication"/>
    <property type="evidence" value="ECO:0007669"/>
    <property type="project" value="TreeGrafter"/>
</dbReference>
<dbReference type="GO" id="GO:0007338">
    <property type="term" value="P:single fertilization"/>
    <property type="evidence" value="ECO:0007669"/>
    <property type="project" value="UniProtKB-KW"/>
</dbReference>
<dbReference type="FunFam" id="2.60.120.340:FF:000003">
    <property type="entry name" value="Nucleoplasmin 2"/>
    <property type="match status" value="1"/>
</dbReference>
<dbReference type="Gene3D" id="2.60.120.340">
    <property type="entry name" value="Nucleoplasmin core domain"/>
    <property type="match status" value="1"/>
</dbReference>
<dbReference type="InterPro" id="IPR004301">
    <property type="entry name" value="Nucleoplasmin"/>
</dbReference>
<dbReference type="InterPro" id="IPR024057">
    <property type="entry name" value="Nucleoplasmin_core_dom"/>
</dbReference>
<dbReference type="InterPro" id="IPR036824">
    <property type="entry name" value="Nucleoplasmin_core_dom_sf"/>
</dbReference>
<dbReference type="PANTHER" id="PTHR22747">
    <property type="entry name" value="NUCLEOPLASMIN"/>
    <property type="match status" value="1"/>
</dbReference>
<dbReference type="PANTHER" id="PTHR22747:SF14">
    <property type="entry name" value="NUCLEOPLASMIN-2"/>
    <property type="match status" value="1"/>
</dbReference>
<dbReference type="Pfam" id="PF03066">
    <property type="entry name" value="Nucleoplasmin"/>
    <property type="match status" value="1"/>
</dbReference>
<dbReference type="SUPFAM" id="SSF69203">
    <property type="entry name" value="Nucleoplasmin-like core domain"/>
    <property type="match status" value="1"/>
</dbReference>
<feature type="chain" id="PRO_0000430717" description="Nucleoplasmin">
    <location>
        <begin position="1"/>
        <end position="198"/>
    </location>
</feature>
<feature type="region of interest" description="Acidic tract A1" evidence="5">
    <location>
        <begin position="35"/>
        <end position="38"/>
    </location>
</feature>
<feature type="region of interest" description="Disordered" evidence="3">
    <location>
        <begin position="125"/>
        <end position="198"/>
    </location>
</feature>
<feature type="region of interest" description="Acidic tract A2" evidence="5">
    <location>
        <begin position="128"/>
        <end position="145"/>
    </location>
</feature>
<feature type="region of interest" description="Acidic tract A3" evidence="5">
    <location>
        <begin position="172"/>
        <end position="174"/>
    </location>
</feature>
<feature type="short sequence motif" description="Bipartite nuclear localization signal" evidence="1">
    <location>
        <begin position="152"/>
        <end position="167"/>
    </location>
</feature>
<feature type="compositionally biased region" description="Acidic residues" evidence="3">
    <location>
        <begin position="125"/>
        <end position="145"/>
    </location>
</feature>
<feature type="compositionally biased region" description="Basic residues" evidence="3">
    <location>
        <begin position="150"/>
        <end position="167"/>
    </location>
</feature>
<feature type="compositionally biased region" description="Basic residues" evidence="3">
    <location>
        <begin position="183"/>
        <end position="198"/>
    </location>
</feature>
<feature type="site" description="Interaction between pentamers" evidence="1">
    <location>
        <position position="57"/>
    </location>
</feature>
<feature type="site" description="Interaction between pentamers" evidence="1">
    <location>
        <position position="82"/>
    </location>
</feature>
<accession>Q1HTZ8</accession>
<proteinExistence type="evidence at protein level"/>
<gene>
    <name evidence="7" type="primary">np</name>
</gene>
<comment type="function">
    <text evidence="1 2">Acts as a chaperone for histones, such as histone H2A-H2B, and thus regulates the assembly of nucleosome cores. Involved in chromatin remodeling, especially during fertilization and early embryonic development. May be involved in sperm chromatin decondensation during fertilization.</text>
</comment>
<comment type="subunit">
    <text evidence="6">Homopentamer.</text>
</comment>
<comment type="subcellular location">
    <subcellularLocation>
        <location evidence="4">Nucleus</location>
    </subcellularLocation>
</comment>
<comment type="tissue specificity">
    <text evidence="4">Expressed in oocytes.</text>
</comment>
<comment type="similarity">
    <text evidence="5">Belongs to the nucleoplasmin family.</text>
</comment>
<organism evidence="7">
    <name type="scientific">Rhinella marina</name>
    <name type="common">Cane toad</name>
    <name type="synonym">Bufo marinus</name>
    <dbReference type="NCBI Taxonomy" id="8386"/>
    <lineage>
        <taxon>Eukaryota</taxon>
        <taxon>Metazoa</taxon>
        <taxon>Chordata</taxon>
        <taxon>Craniata</taxon>
        <taxon>Vertebrata</taxon>
        <taxon>Euteleostomi</taxon>
        <taxon>Amphibia</taxon>
        <taxon>Batrachia</taxon>
        <taxon>Anura</taxon>
        <taxon>Neobatrachia</taxon>
        <taxon>Hyloidea</taxon>
        <taxon>Bufonidae</taxon>
        <taxon>Rhinella</taxon>
    </lineage>
</organism>
<sequence length="198" mass="21674">MASTASNTSKLEKPVSLIWGCELNEQNKTFVFKVSDEDKSEHQLALRTVCLGDKAKDEFHVVEIVPQVEGSDVQPVPIASLKPSILPMATMVGIELTPPVTFRLKAGSGPVYISGQHIALEEDYSWAEEEGEEEVEEEEEEEDPESPPKAVKRPAASKKGSQAKKKKMDKDEEESSEEDSPVKKGKGAGRGRKPAAKK</sequence>
<name>NPM_RHIMB</name>